<comment type="function">
    <text evidence="1 3">Binds gangliosides and stimulates ganglioside GM2 degradation. It stimulates only the breakdown of ganglioside GM2 and glycolipid GA2 by beta-hexosaminidase A. It extracts single GM2 molecules from membranes and presents them in soluble form to beta-hexosaminidase A for cleavage of N-acetyl-D-galactosamine and conversion to GM3. The large binding pocket can accommodate several single chain phospholipids and fatty acids, GM2A also exhibits some calcium-independent phospholipase activity. Has cholesterol transfer activity (By similarity).</text>
</comment>
<comment type="catalytic activity">
    <reaction evidence="1">
        <text>cholesterol(in) = cholesterol(out)</text>
        <dbReference type="Rhea" id="RHEA:39747"/>
        <dbReference type="ChEBI" id="CHEBI:16113"/>
    </reaction>
</comment>
<comment type="subcellular location">
    <subcellularLocation>
        <location>Lysosome</location>
    </subcellularLocation>
</comment>
<comment type="tissue specificity">
    <text>Widely expressed. Most abundant in kidney and testis.</text>
</comment>
<gene>
    <name evidence="5" type="primary">Gm2a</name>
</gene>
<organism>
    <name type="scientific">Mus musculus</name>
    <name type="common">Mouse</name>
    <dbReference type="NCBI Taxonomy" id="10090"/>
    <lineage>
        <taxon>Eukaryota</taxon>
        <taxon>Metazoa</taxon>
        <taxon>Chordata</taxon>
        <taxon>Craniata</taxon>
        <taxon>Vertebrata</taxon>
        <taxon>Euteleostomi</taxon>
        <taxon>Mammalia</taxon>
        <taxon>Eutheria</taxon>
        <taxon>Euarchontoglires</taxon>
        <taxon>Glires</taxon>
        <taxon>Rodentia</taxon>
        <taxon>Myomorpha</taxon>
        <taxon>Muroidea</taxon>
        <taxon>Muridae</taxon>
        <taxon>Murinae</taxon>
        <taxon>Mus</taxon>
        <taxon>Mus</taxon>
    </lineage>
</organism>
<name>SAP3_MOUSE</name>
<feature type="signal peptide" evidence="2">
    <location>
        <begin position="1"/>
        <end position="20"/>
    </location>
</feature>
<feature type="chain" id="PRO_0000031643" description="Ganglioside GM2 activator">
    <location>
        <begin position="21"/>
        <end position="193"/>
    </location>
</feature>
<feature type="glycosylation site" description="N-linked (GlcNAc...) asparagine" evidence="2">
    <location>
        <position position="151"/>
    </location>
</feature>
<feature type="disulfide bond" evidence="3">
    <location>
        <begin position="39"/>
        <end position="183"/>
    </location>
</feature>
<feature type="disulfide bond" evidence="3">
    <location>
        <begin position="99"/>
        <end position="106"/>
    </location>
</feature>
<feature type="disulfide bond" evidence="3">
    <location>
        <begin position="112"/>
        <end position="138"/>
    </location>
</feature>
<feature type="disulfide bond" evidence="3">
    <location>
        <begin position="125"/>
        <end position="136"/>
    </location>
</feature>
<feature type="mutagenesis site" description="Abolishes phospholipid binding." evidence="3">
    <original>Y</original>
    <variation>S</variation>
    <location>
        <position position="168"/>
    </location>
</feature>
<feature type="sequence conflict" description="In Ref. 1; AAA21543." evidence="4" ref="1">
    <original>I</original>
    <variation>T</variation>
    <location>
        <position position="53"/>
    </location>
</feature>
<feature type="strand" evidence="6">
    <location>
        <begin position="35"/>
        <end position="39"/>
    </location>
</feature>
<feature type="helix" evidence="6">
    <location>
        <begin position="40"/>
        <end position="42"/>
    </location>
</feature>
<feature type="strand" evidence="6">
    <location>
        <begin position="44"/>
        <end position="58"/>
    </location>
</feature>
<feature type="strand" evidence="6">
    <location>
        <begin position="60"/>
        <end position="74"/>
    </location>
</feature>
<feature type="strand" evidence="6">
    <location>
        <begin position="81"/>
        <end position="90"/>
    </location>
</feature>
<feature type="strand" evidence="6">
    <location>
        <begin position="93"/>
        <end position="96"/>
    </location>
</feature>
<feature type="strand" evidence="6">
    <location>
        <begin position="107"/>
        <end position="109"/>
    </location>
</feature>
<feature type="helix" evidence="6">
    <location>
        <begin position="111"/>
        <end position="118"/>
    </location>
</feature>
<feature type="turn" evidence="6">
    <location>
        <begin position="127"/>
        <end position="133"/>
    </location>
</feature>
<feature type="strand" evidence="6">
    <location>
        <begin position="142"/>
        <end position="153"/>
    </location>
</feature>
<feature type="strand" evidence="6">
    <location>
        <begin position="165"/>
        <end position="176"/>
    </location>
</feature>
<feature type="strand" evidence="6">
    <location>
        <begin position="179"/>
        <end position="190"/>
    </location>
</feature>
<protein>
    <recommendedName>
        <fullName evidence="4">Ganglioside GM2 activator</fullName>
    </recommendedName>
    <alternativeName>
        <fullName>Cerebroside sulfate activator protein</fullName>
    </alternativeName>
    <alternativeName>
        <fullName>GM2-AP</fullName>
    </alternativeName>
    <alternativeName>
        <fullName>Sphingolipid activator protein 3</fullName>
        <shortName>SAP-3</shortName>
    </alternativeName>
</protein>
<sequence length="193" mass="20824">MHRLPLLLLLGLLLAGSVAPARLVPKRLSQLGGFSWDNCDEGKDPAVIKSLTIQPDPIVVPGDVVVSLEGKTSVPLTAPQKVELTVEKEVAGFWVKIPCVEQLGSCSYENICDLIDEYIPPGESCPEPLHTYGLPCHCPFKEGTYSLPTSNFTVPDLELPSWLSTGNYRIQSILSSGGKRLGCIKIAASLKGR</sequence>
<keyword id="KW-0002">3D-structure</keyword>
<keyword id="KW-1015">Disulfide bond</keyword>
<keyword id="KW-0325">Glycoprotein</keyword>
<keyword id="KW-0378">Hydrolase</keyword>
<keyword id="KW-0443">Lipid metabolism</keyword>
<keyword id="KW-0458">Lysosome</keyword>
<keyword id="KW-1185">Reference proteome</keyword>
<keyword id="KW-0732">Signal</keyword>
<keyword id="KW-0746">Sphingolipid metabolism</keyword>
<proteinExistence type="evidence at protein level"/>
<dbReference type="EMBL" id="U09816">
    <property type="protein sequence ID" value="AAA21543.1"/>
    <property type="molecule type" value="mRNA"/>
</dbReference>
<dbReference type="EMBL" id="L19526">
    <property type="protein sequence ID" value="AAA61929.1"/>
    <property type="molecule type" value="mRNA"/>
</dbReference>
<dbReference type="EMBL" id="U34359">
    <property type="protein sequence ID" value="AAB06275.1"/>
    <property type="status" value="ALT_SEQ"/>
    <property type="molecule type" value="Genomic_DNA"/>
</dbReference>
<dbReference type="EMBL" id="U34356">
    <property type="protein sequence ID" value="AAB06275.1"/>
    <property type="status" value="JOINED"/>
    <property type="molecule type" value="Genomic_DNA"/>
</dbReference>
<dbReference type="EMBL" id="U34357">
    <property type="protein sequence ID" value="AAB06275.1"/>
    <property type="status" value="JOINED"/>
    <property type="molecule type" value="Genomic_DNA"/>
</dbReference>
<dbReference type="EMBL" id="U34358">
    <property type="protein sequence ID" value="AAB06275.1"/>
    <property type="status" value="JOINED"/>
    <property type="molecule type" value="Genomic_DNA"/>
</dbReference>
<dbReference type="EMBL" id="BC004651">
    <property type="protein sequence ID" value="AAH04651.1"/>
    <property type="molecule type" value="mRNA"/>
</dbReference>
<dbReference type="CCDS" id="CCDS24707.1"/>
<dbReference type="PIR" id="S35613">
    <property type="entry name" value="S35613"/>
</dbReference>
<dbReference type="RefSeq" id="NP_034429.1">
    <property type="nucleotide sequence ID" value="NM_010299.3"/>
</dbReference>
<dbReference type="PDB" id="2AGC">
    <property type="method" value="X-ray"/>
    <property type="resolution" value="2.50 A"/>
    <property type="chains" value="A=32-193"/>
</dbReference>
<dbReference type="PDBsum" id="2AGC"/>
<dbReference type="SMR" id="Q60648"/>
<dbReference type="BioGRID" id="199959">
    <property type="interactions" value="1"/>
</dbReference>
<dbReference type="FunCoup" id="Q60648">
    <property type="interactions" value="293"/>
</dbReference>
<dbReference type="STRING" id="10090.ENSMUSP00000000608"/>
<dbReference type="GlyCosmos" id="Q60648">
    <property type="glycosylation" value="1 site, No reported glycans"/>
</dbReference>
<dbReference type="GlyGen" id="Q60648">
    <property type="glycosylation" value="1 site"/>
</dbReference>
<dbReference type="PhosphoSitePlus" id="Q60648"/>
<dbReference type="SwissPalm" id="Q60648"/>
<dbReference type="jPOST" id="Q60648"/>
<dbReference type="PaxDb" id="10090-ENSMUSP00000000608"/>
<dbReference type="ProteomicsDB" id="256701"/>
<dbReference type="Pumba" id="Q60648"/>
<dbReference type="Antibodypedia" id="2212">
    <property type="antibodies" value="470 antibodies from 32 providers"/>
</dbReference>
<dbReference type="Ensembl" id="ENSMUST00000000608.8">
    <property type="protein sequence ID" value="ENSMUSP00000000608.8"/>
    <property type="gene ID" value="ENSMUSG00000000594.8"/>
</dbReference>
<dbReference type="GeneID" id="14667"/>
<dbReference type="KEGG" id="mmu:14667"/>
<dbReference type="UCSC" id="uc007iyw.2">
    <property type="organism name" value="mouse"/>
</dbReference>
<dbReference type="AGR" id="MGI:95762"/>
<dbReference type="CTD" id="2760"/>
<dbReference type="MGI" id="MGI:95762">
    <property type="gene designation" value="Gm2a"/>
</dbReference>
<dbReference type="VEuPathDB" id="HostDB:ENSMUSG00000000594"/>
<dbReference type="eggNOG" id="ENOG502S05S">
    <property type="taxonomic scope" value="Eukaryota"/>
</dbReference>
<dbReference type="GeneTree" id="ENSGT00390000003288"/>
<dbReference type="HOGENOM" id="CLU_108261_0_0_1"/>
<dbReference type="InParanoid" id="Q60648"/>
<dbReference type="OMA" id="WENCGPP"/>
<dbReference type="OrthoDB" id="6409159at2759"/>
<dbReference type="PhylomeDB" id="Q60648"/>
<dbReference type="TreeFam" id="TF353575"/>
<dbReference type="Reactome" id="R-MMU-6798695">
    <property type="pathway name" value="Neutrophil degranulation"/>
</dbReference>
<dbReference type="Reactome" id="R-MMU-9840310">
    <property type="pathway name" value="Glycosphingolipid catabolism"/>
</dbReference>
<dbReference type="BioGRID-ORCS" id="14667">
    <property type="hits" value="3 hits in 80 CRISPR screens"/>
</dbReference>
<dbReference type="ChiTaRS" id="Gm2a">
    <property type="organism name" value="mouse"/>
</dbReference>
<dbReference type="EvolutionaryTrace" id="Q60648"/>
<dbReference type="PRO" id="PR:Q60648"/>
<dbReference type="Proteomes" id="UP000000589">
    <property type="component" value="Chromosome 11"/>
</dbReference>
<dbReference type="RNAct" id="Q60648">
    <property type="molecule type" value="protein"/>
</dbReference>
<dbReference type="Bgee" id="ENSMUSG00000000594">
    <property type="expression patterns" value="Expressed in gastrula and 267 other cell types or tissues"/>
</dbReference>
<dbReference type="ExpressionAtlas" id="Q60648">
    <property type="expression patterns" value="baseline and differential"/>
</dbReference>
<dbReference type="GO" id="GO:0005829">
    <property type="term" value="C:cytosol"/>
    <property type="evidence" value="ECO:0007669"/>
    <property type="project" value="Ensembl"/>
</dbReference>
<dbReference type="GO" id="GO:0005764">
    <property type="term" value="C:lysosome"/>
    <property type="evidence" value="ECO:0007669"/>
    <property type="project" value="UniProtKB-SubCell"/>
</dbReference>
<dbReference type="GO" id="GO:0016020">
    <property type="term" value="C:membrane"/>
    <property type="evidence" value="ECO:0007669"/>
    <property type="project" value="GOC"/>
</dbReference>
<dbReference type="GO" id="GO:0005739">
    <property type="term" value="C:mitochondrion"/>
    <property type="evidence" value="ECO:0007005"/>
    <property type="project" value="MGI"/>
</dbReference>
<dbReference type="GO" id="GO:0004563">
    <property type="term" value="F:beta-N-acetylhexosaminidase activity"/>
    <property type="evidence" value="ECO:0000315"/>
    <property type="project" value="MGI"/>
</dbReference>
<dbReference type="GO" id="GO:0008047">
    <property type="term" value="F:enzyme activator activity"/>
    <property type="evidence" value="ECO:0000314"/>
    <property type="project" value="MGI"/>
</dbReference>
<dbReference type="GO" id="GO:0006689">
    <property type="term" value="P:ganglioside catabolic process"/>
    <property type="evidence" value="ECO:0000315"/>
    <property type="project" value="MGI"/>
</dbReference>
<dbReference type="GO" id="GO:0007611">
    <property type="term" value="P:learning or memory"/>
    <property type="evidence" value="ECO:0000315"/>
    <property type="project" value="MGI"/>
</dbReference>
<dbReference type="GO" id="GO:0019915">
    <property type="term" value="P:lipid storage"/>
    <property type="evidence" value="ECO:0000315"/>
    <property type="project" value="MGI"/>
</dbReference>
<dbReference type="GO" id="GO:0050877">
    <property type="term" value="P:nervous system process"/>
    <property type="evidence" value="ECO:0000315"/>
    <property type="project" value="MGI"/>
</dbReference>
<dbReference type="GO" id="GO:0050885">
    <property type="term" value="P:neuromuscular process controlling balance"/>
    <property type="evidence" value="ECO:0000315"/>
    <property type="project" value="MGI"/>
</dbReference>
<dbReference type="GO" id="GO:0009313">
    <property type="term" value="P:oligosaccharide catabolic process"/>
    <property type="evidence" value="ECO:0000315"/>
    <property type="project" value="MGI"/>
</dbReference>
<dbReference type="FunFam" id="2.70.220.10:FF:000001">
    <property type="entry name" value="GM2 ganglioside activator protein"/>
    <property type="match status" value="1"/>
</dbReference>
<dbReference type="Gene3D" id="2.70.220.10">
    <property type="entry name" value="Ganglioside GM2 activator"/>
    <property type="match status" value="1"/>
</dbReference>
<dbReference type="InterPro" id="IPR028996">
    <property type="entry name" value="GM2-AP"/>
</dbReference>
<dbReference type="InterPro" id="IPR036846">
    <property type="entry name" value="GM2-AP_sf"/>
</dbReference>
<dbReference type="InterPro" id="IPR003172">
    <property type="entry name" value="ML_dom"/>
</dbReference>
<dbReference type="PANTHER" id="PTHR17357:SF0">
    <property type="entry name" value="GANGLIOSIDE GM2 ACTIVATOR"/>
    <property type="match status" value="1"/>
</dbReference>
<dbReference type="PANTHER" id="PTHR17357">
    <property type="entry name" value="GM2 GANGLIOSIDE ACTIVATOR PROTEIN"/>
    <property type="match status" value="1"/>
</dbReference>
<dbReference type="Pfam" id="PF02221">
    <property type="entry name" value="E1_DerP2_DerF2"/>
    <property type="match status" value="1"/>
</dbReference>
<dbReference type="SMART" id="SM00737">
    <property type="entry name" value="ML"/>
    <property type="match status" value="1"/>
</dbReference>
<dbReference type="SUPFAM" id="SSF63707">
    <property type="entry name" value="Ganglioside M2 (gm2) activator"/>
    <property type="match status" value="1"/>
</dbReference>
<reference key="1">
    <citation type="journal article" date="1994" name="Genomics">
        <title>The mouse gene encoding the GM2 activator protein (Gm2a): cDNA sequence, expression, and chromosome mapping.</title>
        <authorList>
            <person name="Yamanaka S."/>
            <person name="Johnson O.N."/>
            <person name="Lyu M.S."/>
            <person name="Kozak C.A."/>
            <person name="Proia R.L."/>
        </authorList>
    </citation>
    <scope>NUCLEOTIDE SEQUENCE</scope>
    <source>
        <strain>C57BL/6 X CBA</strain>
        <tissue>Liver</tissue>
    </source>
</reference>
<reference key="2">
    <citation type="journal article" date="1993" name="Biochem. J.">
        <title>Cloning and sequence analysis of a cDNA clone coding for the mouse GM2 activator protein.</title>
        <authorList>
            <person name="Bellachioma G."/>
            <person name="Stirling J.L."/>
            <person name="Orlacchio A."/>
            <person name="Beccari T."/>
        </authorList>
    </citation>
    <scope>NUCLEOTIDE SEQUENCE [MRNA]</scope>
</reference>
<reference key="3">
    <citation type="journal article" date="1997" name="Mamm. Genome">
        <title>Structural organization and expression of the gene for the mouse GM2 activator protein.</title>
        <authorList>
            <person name="Bertoni C."/>
            <person name="Appolloni M.G."/>
            <person name="Stirling J.L."/>
            <person name="Li S.C."/>
            <person name="Li Y.T."/>
            <person name="Orlacchio A."/>
            <person name="Beccari T."/>
        </authorList>
    </citation>
    <scope>NUCLEOTIDE SEQUENCE [GENOMIC DNA]</scope>
    <source>
        <strain>C57BL/6 X CBA</strain>
    </source>
</reference>
<reference key="4">
    <citation type="journal article" date="2004" name="Genome Res.">
        <title>The status, quality, and expansion of the NIH full-length cDNA project: the Mammalian Gene Collection (MGC).</title>
        <authorList>
            <consortium name="The MGC Project Team"/>
        </authorList>
    </citation>
    <scope>NUCLEOTIDE SEQUENCE [LARGE SCALE MRNA]</scope>
    <source>
        <strain>C57BL/6J</strain>
        <tissue>Mammary gland</tissue>
    </source>
</reference>
<reference key="5">
    <citation type="journal article" date="2010" name="Cell">
        <title>A tissue-specific atlas of mouse protein phosphorylation and expression.</title>
        <authorList>
            <person name="Huttlin E.L."/>
            <person name="Jedrychowski M.P."/>
            <person name="Elias J.E."/>
            <person name="Goswami T."/>
            <person name="Rad R."/>
            <person name="Beausoleil S.A."/>
            <person name="Villen J."/>
            <person name="Haas W."/>
            <person name="Sowa M.E."/>
            <person name="Gygi S.P."/>
        </authorList>
    </citation>
    <scope>IDENTIFICATION BY MASS SPECTROMETRY [LARGE SCALE ANALYSIS]</scope>
    <source>
        <tissue>Brain</tissue>
        <tissue>Brown adipose tissue</tissue>
        <tissue>Kidney</tissue>
        <tissue>Liver</tissue>
        <tissue>Lung</tissue>
        <tissue>Pancreas</tissue>
        <tissue>Spleen</tissue>
        <tissue>Testis</tissue>
    </source>
</reference>
<reference key="6">
    <citation type="journal article" date="2005" name="Biochemistry">
        <title>Crystal structure analysis of phosphatidylcholine-GM2-activator product complexes: evidence for hydrolase activity.</title>
        <authorList>
            <person name="Wright C.S."/>
            <person name="Mi L.Z."/>
            <person name="Lee S."/>
            <person name="Rastinejad F."/>
        </authorList>
    </citation>
    <scope>X-RAY CRYSTALLOGRAPHY (2.5 ANGSTROMS) OF 32-193 IN COMPLEX WITH LYSOPHOSPHATIDYLCHOLINE</scope>
    <scope>FUNCTION</scope>
    <scope>DISULFIDE BONDS</scope>
    <scope>MUTAGENESIS OF TYR-168</scope>
</reference>
<evidence type="ECO:0000250" key="1">
    <source>
        <dbReference type="UniProtKB" id="P17900"/>
    </source>
</evidence>
<evidence type="ECO:0000255" key="2"/>
<evidence type="ECO:0000269" key="3">
    <source>
    </source>
</evidence>
<evidence type="ECO:0000305" key="4"/>
<evidence type="ECO:0000312" key="5">
    <source>
        <dbReference type="MGI" id="MGI:95762"/>
    </source>
</evidence>
<evidence type="ECO:0007829" key="6">
    <source>
        <dbReference type="PDB" id="2AGC"/>
    </source>
</evidence>
<accession>Q60648</accession>
<accession>Q61610</accession>
<accession>Q61819</accession>